<gene>
    <name evidence="1" type="primary">cutC</name>
    <name type="ordered locus">EcE24377A_2106</name>
</gene>
<proteinExistence type="inferred from homology"/>
<feature type="chain" id="PRO_1000062254" description="PF03932 family protein CutC">
    <location>
        <begin position="1"/>
        <end position="248"/>
    </location>
</feature>
<protein>
    <recommendedName>
        <fullName evidence="1">PF03932 family protein CutC</fullName>
    </recommendedName>
</protein>
<evidence type="ECO:0000255" key="1">
    <source>
        <dbReference type="HAMAP-Rule" id="MF_00795"/>
    </source>
</evidence>
<accession>A7ZN00</accession>
<dbReference type="EMBL" id="CP000800">
    <property type="protein sequence ID" value="ABV17654.1"/>
    <property type="molecule type" value="Genomic_DNA"/>
</dbReference>
<dbReference type="RefSeq" id="WP_001185741.1">
    <property type="nucleotide sequence ID" value="NC_009801.1"/>
</dbReference>
<dbReference type="SMR" id="A7ZN00"/>
<dbReference type="GeneID" id="93776175"/>
<dbReference type="KEGG" id="ecw:EcE24377A_2106"/>
<dbReference type="HOGENOM" id="CLU_050555_3_1_6"/>
<dbReference type="Proteomes" id="UP000001122">
    <property type="component" value="Chromosome"/>
</dbReference>
<dbReference type="GO" id="GO:0005737">
    <property type="term" value="C:cytoplasm"/>
    <property type="evidence" value="ECO:0007669"/>
    <property type="project" value="UniProtKB-SubCell"/>
</dbReference>
<dbReference type="GO" id="GO:0005507">
    <property type="term" value="F:copper ion binding"/>
    <property type="evidence" value="ECO:0007669"/>
    <property type="project" value="TreeGrafter"/>
</dbReference>
<dbReference type="FunFam" id="3.20.20.380:FF:000001">
    <property type="entry name" value="Copper homeostasis protein CutC"/>
    <property type="match status" value="1"/>
</dbReference>
<dbReference type="Gene3D" id="3.20.20.380">
    <property type="entry name" value="Copper homeostasis (CutC) domain"/>
    <property type="match status" value="1"/>
</dbReference>
<dbReference type="HAMAP" id="MF_00795">
    <property type="entry name" value="CutC"/>
    <property type="match status" value="1"/>
</dbReference>
<dbReference type="InterPro" id="IPR005627">
    <property type="entry name" value="CutC-like"/>
</dbReference>
<dbReference type="InterPro" id="IPR036822">
    <property type="entry name" value="CutC-like_dom_sf"/>
</dbReference>
<dbReference type="NCBIfam" id="NF008603">
    <property type="entry name" value="PRK11572.1"/>
    <property type="match status" value="1"/>
</dbReference>
<dbReference type="PANTHER" id="PTHR12598">
    <property type="entry name" value="COPPER HOMEOSTASIS PROTEIN CUTC"/>
    <property type="match status" value="1"/>
</dbReference>
<dbReference type="PANTHER" id="PTHR12598:SF0">
    <property type="entry name" value="COPPER HOMEOSTASIS PROTEIN CUTC HOMOLOG"/>
    <property type="match status" value="1"/>
</dbReference>
<dbReference type="Pfam" id="PF03932">
    <property type="entry name" value="CutC"/>
    <property type="match status" value="1"/>
</dbReference>
<dbReference type="SUPFAM" id="SSF110395">
    <property type="entry name" value="CutC-like"/>
    <property type="match status" value="1"/>
</dbReference>
<comment type="subunit">
    <text evidence="1">Homodimer.</text>
</comment>
<comment type="subcellular location">
    <subcellularLocation>
        <location evidence="1">Cytoplasm</location>
    </subcellularLocation>
</comment>
<comment type="similarity">
    <text evidence="1">Belongs to the CutC family.</text>
</comment>
<comment type="caution">
    <text evidence="1">Once thought to be involved in copper homeostasis, experiments in E.coli have shown this is not the case.</text>
</comment>
<sequence length="248" mass="26762">MALLEICCYSMECALTAQQNGADRVELCAAPKEGGLTPSLGVLKSVRQRVTIPVHPIIRPRGGDFCYSDGEFAAILEDVRTVRELGFPGLVTGVLDVDGNVDMPRMEKIMAAAGPLAVTFHRAFDMCANPLYTLNNLAELGIARVLTSGQKSDALQGLSKIMELIAHRDAPIIMAGAGVRAENLHHFLDAGVLEVHSSAGAWQASPMRYRNQGLSMSSDEHADEYSRYIVDGAAVAEMKGIIERHQAK</sequence>
<keyword id="KW-0963">Cytoplasm</keyword>
<keyword id="KW-1185">Reference proteome</keyword>
<name>CUTC_ECO24</name>
<reference key="1">
    <citation type="journal article" date="2008" name="J. Bacteriol.">
        <title>The pangenome structure of Escherichia coli: comparative genomic analysis of E. coli commensal and pathogenic isolates.</title>
        <authorList>
            <person name="Rasko D.A."/>
            <person name="Rosovitz M.J."/>
            <person name="Myers G.S.A."/>
            <person name="Mongodin E.F."/>
            <person name="Fricke W.F."/>
            <person name="Gajer P."/>
            <person name="Crabtree J."/>
            <person name="Sebaihia M."/>
            <person name="Thomson N.R."/>
            <person name="Chaudhuri R."/>
            <person name="Henderson I.R."/>
            <person name="Sperandio V."/>
            <person name="Ravel J."/>
        </authorList>
    </citation>
    <scope>NUCLEOTIDE SEQUENCE [LARGE SCALE GENOMIC DNA]</scope>
    <source>
        <strain>E24377A / ETEC</strain>
    </source>
</reference>
<organism>
    <name type="scientific">Escherichia coli O139:H28 (strain E24377A / ETEC)</name>
    <dbReference type="NCBI Taxonomy" id="331111"/>
    <lineage>
        <taxon>Bacteria</taxon>
        <taxon>Pseudomonadati</taxon>
        <taxon>Pseudomonadota</taxon>
        <taxon>Gammaproteobacteria</taxon>
        <taxon>Enterobacterales</taxon>
        <taxon>Enterobacteriaceae</taxon>
        <taxon>Escherichia</taxon>
    </lineage>
</organism>